<dbReference type="EC" id="2.3.2.27"/>
<dbReference type="EMBL" id="AB046382">
    <property type="protein sequence ID" value="BAB16375.1"/>
    <property type="molecule type" value="mRNA"/>
</dbReference>
<dbReference type="EMBL" id="AK053507">
    <property type="protein sequence ID" value="BAC35409.1"/>
    <property type="molecule type" value="mRNA"/>
</dbReference>
<dbReference type="EMBL" id="BC031540">
    <property type="protein sequence ID" value="AAH31540.1"/>
    <property type="molecule type" value="mRNA"/>
</dbReference>
<dbReference type="CCDS" id="CCDS37611.1">
    <molecule id="Q9ESN2-1"/>
</dbReference>
<dbReference type="RefSeq" id="NP_077788.2">
    <property type="nucleotide sequence ID" value="NM_024468.2"/>
</dbReference>
<dbReference type="RefSeq" id="XP_006525235.1">
    <property type="nucleotide sequence ID" value="XM_006525172.3"/>
</dbReference>
<dbReference type="BMRB" id="Q9ESN2"/>
<dbReference type="SMR" id="Q9ESN2"/>
<dbReference type="FunCoup" id="Q9ESN2">
    <property type="interactions" value="2059"/>
</dbReference>
<dbReference type="STRING" id="10090.ENSMUSP00000109336"/>
<dbReference type="PhosphoSitePlus" id="Q9ESN2"/>
<dbReference type="PaxDb" id="10090-ENSMUSP00000109336"/>
<dbReference type="ProteomicsDB" id="298298">
    <molecule id="Q9ESN2-1"/>
</dbReference>
<dbReference type="ProteomicsDB" id="298299">
    <molecule id="Q9ESN2-2"/>
</dbReference>
<dbReference type="ProteomicsDB" id="298300">
    <molecule id="Q9ESN2-3"/>
</dbReference>
<dbReference type="DNASU" id="79263"/>
<dbReference type="GeneID" id="79263"/>
<dbReference type="KEGG" id="mmu:79263"/>
<dbReference type="AGR" id="MGI:1890659"/>
<dbReference type="CTD" id="56658"/>
<dbReference type="MGI" id="MGI:1890659">
    <property type="gene designation" value="Trim39"/>
</dbReference>
<dbReference type="eggNOG" id="KOG2177">
    <property type="taxonomic scope" value="Eukaryota"/>
</dbReference>
<dbReference type="InParanoid" id="Q9ESN2"/>
<dbReference type="Reactome" id="R-MMU-983168">
    <property type="pathway name" value="Antigen processing: Ubiquitination &amp; Proteasome degradation"/>
</dbReference>
<dbReference type="UniPathway" id="UPA00143"/>
<dbReference type="BioGRID-ORCS" id="79263">
    <property type="hits" value="1 hit in 79 CRISPR screens"/>
</dbReference>
<dbReference type="ChiTaRS" id="Trim39">
    <property type="organism name" value="mouse"/>
</dbReference>
<dbReference type="PRO" id="PR:Q9ESN2"/>
<dbReference type="Proteomes" id="UP000000589">
    <property type="component" value="Unplaced"/>
</dbReference>
<dbReference type="RNAct" id="Q9ESN2">
    <property type="molecule type" value="protein"/>
</dbReference>
<dbReference type="GO" id="GO:0005829">
    <property type="term" value="C:cytosol"/>
    <property type="evidence" value="ECO:0007669"/>
    <property type="project" value="UniProtKB-SubCell"/>
</dbReference>
<dbReference type="GO" id="GO:0005739">
    <property type="term" value="C:mitochondrion"/>
    <property type="evidence" value="ECO:0007669"/>
    <property type="project" value="UniProtKB-SubCell"/>
</dbReference>
<dbReference type="GO" id="GO:0005634">
    <property type="term" value="C:nucleus"/>
    <property type="evidence" value="ECO:0000250"/>
    <property type="project" value="UniProtKB"/>
</dbReference>
<dbReference type="GO" id="GO:0016740">
    <property type="term" value="F:transferase activity"/>
    <property type="evidence" value="ECO:0007669"/>
    <property type="project" value="UniProtKB-KW"/>
</dbReference>
<dbReference type="GO" id="GO:0008270">
    <property type="term" value="F:zinc ion binding"/>
    <property type="evidence" value="ECO:0007669"/>
    <property type="project" value="UniProtKB-KW"/>
</dbReference>
<dbReference type="GO" id="GO:0006915">
    <property type="term" value="P:apoptotic process"/>
    <property type="evidence" value="ECO:0007669"/>
    <property type="project" value="UniProtKB-KW"/>
</dbReference>
<dbReference type="GO" id="GO:0007095">
    <property type="term" value="P:mitotic G2 DNA damage checkpoint signaling"/>
    <property type="evidence" value="ECO:0000250"/>
    <property type="project" value="UniProtKB"/>
</dbReference>
<dbReference type="GO" id="GO:0043124">
    <property type="term" value="P:negative regulation of canonical NF-kappaB signal transduction"/>
    <property type="evidence" value="ECO:0000250"/>
    <property type="project" value="UniProtKB"/>
</dbReference>
<dbReference type="GO" id="GO:0032435">
    <property type="term" value="P:negative regulation of proteasomal ubiquitin-dependent protein catabolic process"/>
    <property type="evidence" value="ECO:0000250"/>
    <property type="project" value="UniProtKB"/>
</dbReference>
<dbReference type="GO" id="GO:0050821">
    <property type="term" value="P:protein stabilization"/>
    <property type="evidence" value="ECO:0000250"/>
    <property type="project" value="UniProtKB"/>
</dbReference>
<dbReference type="GO" id="GO:0016567">
    <property type="term" value="P:protein ubiquitination"/>
    <property type="evidence" value="ECO:0007669"/>
    <property type="project" value="UniProtKB-UniPathway"/>
</dbReference>
<dbReference type="GO" id="GO:1902806">
    <property type="term" value="P:regulation of cell cycle G1/S phase transition"/>
    <property type="evidence" value="ECO:0000250"/>
    <property type="project" value="UniProtKB"/>
</dbReference>
<dbReference type="CDD" id="cd19780">
    <property type="entry name" value="Bbox2_TRIM39-like"/>
    <property type="match status" value="1"/>
</dbReference>
<dbReference type="CDD" id="cd16594">
    <property type="entry name" value="RING-HC_TRIM7-like_C-IV"/>
    <property type="match status" value="1"/>
</dbReference>
<dbReference type="CDD" id="cd13745">
    <property type="entry name" value="SPRY_PRY_TRIM39"/>
    <property type="match status" value="1"/>
</dbReference>
<dbReference type="FunFam" id="2.60.120.920:FF:000004">
    <property type="entry name" value="Butyrophilin subfamily 1 member A1"/>
    <property type="match status" value="1"/>
</dbReference>
<dbReference type="FunFam" id="3.30.160.60:FF:003220">
    <property type="entry name" value="E3 ubiquitin-protein ligase TRIM39"/>
    <property type="match status" value="1"/>
</dbReference>
<dbReference type="FunFam" id="3.30.40.10:FF:000171">
    <property type="entry name" value="E3 ubiquitin-protein ligase TRIM39"/>
    <property type="match status" value="1"/>
</dbReference>
<dbReference type="Gene3D" id="2.60.120.920">
    <property type="match status" value="1"/>
</dbReference>
<dbReference type="Gene3D" id="3.30.160.60">
    <property type="entry name" value="Classic Zinc Finger"/>
    <property type="match status" value="1"/>
</dbReference>
<dbReference type="Gene3D" id="3.30.40.10">
    <property type="entry name" value="Zinc/RING finger domain, C3HC4 (zinc finger)"/>
    <property type="match status" value="1"/>
</dbReference>
<dbReference type="InterPro" id="IPR001870">
    <property type="entry name" value="B30.2/SPRY"/>
</dbReference>
<dbReference type="InterPro" id="IPR043136">
    <property type="entry name" value="B30.2/SPRY_sf"/>
</dbReference>
<dbReference type="InterPro" id="IPR003879">
    <property type="entry name" value="Butyrophylin_SPRY"/>
</dbReference>
<dbReference type="InterPro" id="IPR013320">
    <property type="entry name" value="ConA-like_dom_sf"/>
</dbReference>
<dbReference type="InterPro" id="IPR006574">
    <property type="entry name" value="PRY"/>
</dbReference>
<dbReference type="InterPro" id="IPR035033">
    <property type="entry name" value="PRY/SPRY_TRIM39"/>
</dbReference>
<dbReference type="InterPro" id="IPR003877">
    <property type="entry name" value="SPRY_dom"/>
</dbReference>
<dbReference type="InterPro" id="IPR050143">
    <property type="entry name" value="TRIM/RBCC"/>
</dbReference>
<dbReference type="InterPro" id="IPR000315">
    <property type="entry name" value="Znf_B-box"/>
</dbReference>
<dbReference type="InterPro" id="IPR001841">
    <property type="entry name" value="Znf_RING"/>
</dbReference>
<dbReference type="InterPro" id="IPR013083">
    <property type="entry name" value="Znf_RING/FYVE/PHD"/>
</dbReference>
<dbReference type="InterPro" id="IPR017907">
    <property type="entry name" value="Znf_RING_CS"/>
</dbReference>
<dbReference type="PANTHER" id="PTHR24103">
    <property type="entry name" value="E3 UBIQUITIN-PROTEIN LIGASE TRIM"/>
    <property type="match status" value="1"/>
</dbReference>
<dbReference type="Pfam" id="PF13765">
    <property type="entry name" value="PRY"/>
    <property type="match status" value="1"/>
</dbReference>
<dbReference type="Pfam" id="PF00622">
    <property type="entry name" value="SPRY"/>
    <property type="match status" value="1"/>
</dbReference>
<dbReference type="Pfam" id="PF00643">
    <property type="entry name" value="zf-B_box"/>
    <property type="match status" value="1"/>
</dbReference>
<dbReference type="Pfam" id="PF15227">
    <property type="entry name" value="zf-C3HC4_4"/>
    <property type="match status" value="1"/>
</dbReference>
<dbReference type="PRINTS" id="PR01407">
    <property type="entry name" value="BUTYPHLNCDUF"/>
</dbReference>
<dbReference type="SMART" id="SM00336">
    <property type="entry name" value="BBOX"/>
    <property type="match status" value="1"/>
</dbReference>
<dbReference type="SMART" id="SM00589">
    <property type="entry name" value="PRY"/>
    <property type="match status" value="1"/>
</dbReference>
<dbReference type="SMART" id="SM00184">
    <property type="entry name" value="RING"/>
    <property type="match status" value="1"/>
</dbReference>
<dbReference type="SMART" id="SM00449">
    <property type="entry name" value="SPRY"/>
    <property type="match status" value="1"/>
</dbReference>
<dbReference type="SUPFAM" id="SSF57845">
    <property type="entry name" value="B-box zinc-binding domain"/>
    <property type="match status" value="1"/>
</dbReference>
<dbReference type="SUPFAM" id="SSF49899">
    <property type="entry name" value="Concanavalin A-like lectins/glucanases"/>
    <property type="match status" value="1"/>
</dbReference>
<dbReference type="SUPFAM" id="SSF57850">
    <property type="entry name" value="RING/U-box"/>
    <property type="match status" value="1"/>
</dbReference>
<dbReference type="PROSITE" id="PS50188">
    <property type="entry name" value="B302_SPRY"/>
    <property type="match status" value="1"/>
</dbReference>
<dbReference type="PROSITE" id="PS50119">
    <property type="entry name" value="ZF_BBOX"/>
    <property type="match status" value="1"/>
</dbReference>
<dbReference type="PROSITE" id="PS00518">
    <property type="entry name" value="ZF_RING_1"/>
    <property type="match status" value="1"/>
</dbReference>
<dbReference type="PROSITE" id="PS50089">
    <property type="entry name" value="ZF_RING_2"/>
    <property type="match status" value="1"/>
</dbReference>
<gene>
    <name type="primary">Trim39</name>
    <name type="synonym">Rnf23</name>
    <name type="synonym">Tfp</name>
</gene>
<protein>
    <recommendedName>
        <fullName>E3 ubiquitin-protein ligase TRIM39</fullName>
        <ecNumber>2.3.2.27</ecNumber>
    </recommendedName>
    <alternativeName>
        <fullName>RING finger protein 23</fullName>
    </alternativeName>
    <alternativeName>
        <fullName evidence="8">RING-type E3 ubiquitin transferase TRIM39</fullName>
    </alternativeName>
    <alternativeName>
        <fullName>Testis-abundant finger protein</fullName>
    </alternativeName>
    <alternativeName>
        <fullName>Tripartite motif-containing protein 39</fullName>
    </alternativeName>
</protein>
<feature type="chain" id="PRO_0000056258" description="E3 ubiquitin-protein ligase TRIM39">
    <location>
        <begin position="1"/>
        <end position="488"/>
    </location>
</feature>
<feature type="domain" description="B30.2/SPRY" evidence="5">
    <location>
        <begin position="289"/>
        <end position="484"/>
    </location>
</feature>
<feature type="zinc finger region" description="RING-type" evidence="4">
    <location>
        <begin position="29"/>
        <end position="70"/>
    </location>
</feature>
<feature type="zinc finger region" description="B box-type" evidence="3">
    <location>
        <begin position="102"/>
        <end position="143"/>
    </location>
</feature>
<feature type="region of interest" description="Interaction with CDKN1A" evidence="1">
    <location>
        <begin position="268"/>
        <end position="307"/>
    </location>
</feature>
<feature type="region of interest" description="Interaction with CDKN1A" evidence="1">
    <location>
        <begin position="359"/>
        <end position="488"/>
    </location>
</feature>
<feature type="coiled-coil region" evidence="2">
    <location>
        <begin position="181"/>
        <end position="250"/>
    </location>
</feature>
<feature type="binding site" evidence="3">
    <location>
        <position position="107"/>
    </location>
    <ligand>
        <name>Zn(2+)</name>
        <dbReference type="ChEBI" id="CHEBI:29105"/>
    </ligand>
</feature>
<feature type="binding site" evidence="3">
    <location>
        <position position="110"/>
    </location>
    <ligand>
        <name>Zn(2+)</name>
        <dbReference type="ChEBI" id="CHEBI:29105"/>
    </ligand>
</feature>
<feature type="binding site" evidence="3">
    <location>
        <position position="129"/>
    </location>
    <ligand>
        <name>Zn(2+)</name>
        <dbReference type="ChEBI" id="CHEBI:29105"/>
    </ligand>
</feature>
<feature type="binding site" evidence="3">
    <location>
        <position position="135"/>
    </location>
    <ligand>
        <name>Zn(2+)</name>
        <dbReference type="ChEBI" id="CHEBI:29105"/>
    </ligand>
</feature>
<feature type="splice variant" id="VSP_012063" description="In isoform 3." evidence="7">
    <original>DVKS</original>
    <variation>KLCA</variation>
    <location>
        <begin position="261"/>
        <end position="264"/>
    </location>
</feature>
<feature type="splice variant" id="VSP_012064" description="In isoform 3." evidence="7">
    <location>
        <begin position="265"/>
        <end position="488"/>
    </location>
</feature>
<feature type="splice variant" id="VSP_012065" description="In isoform 2." evidence="6">
    <original>A</original>
    <variation>APLWLLPPA</variation>
    <location>
        <position position="307"/>
    </location>
</feature>
<feature type="sequence conflict" description="In Ref. 2; BAC35409." evidence="8" ref="2">
    <original>A</original>
    <variation>T</variation>
    <location>
        <position position="11"/>
    </location>
</feature>
<comment type="function">
    <text evidence="1">E3 ubiquitin-protein ligase (By similarity). May facilitate apoptosis by inhibiting APC/C-Cdh1-mediated poly-ubiquitination and subsequent proteasome-mediated degradation of the pro-apoptotic protein MOAP1 (By similarity). Regulates the G1/S transition of the cell cycle and DNA damage-induced G2 arrest by stabilizing CDKN1A/p21 (By similarity). Positively regulates CDKN1A/p21 stability by competing with DTL for CDKN1A/p21 binding, therefore disrupting DCX(DTL) E3 ubiquitin ligase complex-mediated CDKN1A/p21 ubiquitination and degradation (By similarity).</text>
</comment>
<comment type="catalytic activity">
    <reaction>
        <text>S-ubiquitinyl-[E2 ubiquitin-conjugating enzyme]-L-cysteine + [acceptor protein]-L-lysine = [E2 ubiquitin-conjugating enzyme]-L-cysteine + N(6)-ubiquitinyl-[acceptor protein]-L-lysine.</text>
        <dbReference type="EC" id="2.3.2.27"/>
    </reaction>
</comment>
<comment type="pathway">
    <text>Protein modification; protein ubiquitination.</text>
</comment>
<comment type="subunit">
    <text evidence="1">Interacts with MOAP1 (By similarity). Interacts with CDKN1A (By similarity).</text>
</comment>
<comment type="subcellular location">
    <subcellularLocation>
        <location evidence="1">Cytoplasm</location>
        <location evidence="1">Cytosol</location>
    </subcellularLocation>
    <subcellularLocation>
        <location evidence="1">Mitochondrion</location>
    </subcellularLocation>
    <subcellularLocation>
        <location evidence="1">Nucleus</location>
    </subcellularLocation>
    <text evidence="1">Found predominantly in the cytosol. Partial shift from the cytosol to the mitochondria when colocalized with MOAP1. Colocalizes with CDKN1A in the nucleus.</text>
</comment>
<comment type="alternative products">
    <event type="alternative splicing"/>
    <isoform>
        <id>Q9ESN2-1</id>
        <name>1</name>
        <sequence type="displayed"/>
    </isoform>
    <isoform>
        <id>Q9ESN2-2</id>
        <name>2</name>
        <sequence type="described" ref="VSP_012065"/>
    </isoform>
    <isoform>
        <id>Q9ESN2-3</id>
        <name>3</name>
        <sequence type="described" ref="VSP_012063 VSP_012064"/>
    </isoform>
</comment>
<comment type="PTM">
    <text evidence="1">Autoubiquitinated.</text>
</comment>
<comment type="similarity">
    <text evidence="8">Belongs to the TRIM/RBCC family.</text>
</comment>
<evidence type="ECO:0000250" key="1">
    <source>
        <dbReference type="UniProtKB" id="Q9HCM9"/>
    </source>
</evidence>
<evidence type="ECO:0000255" key="2"/>
<evidence type="ECO:0000255" key="3">
    <source>
        <dbReference type="PROSITE-ProRule" id="PRU00024"/>
    </source>
</evidence>
<evidence type="ECO:0000255" key="4">
    <source>
        <dbReference type="PROSITE-ProRule" id="PRU00175"/>
    </source>
</evidence>
<evidence type="ECO:0000255" key="5">
    <source>
        <dbReference type="PROSITE-ProRule" id="PRU00548"/>
    </source>
</evidence>
<evidence type="ECO:0000303" key="6">
    <source>
    </source>
</evidence>
<evidence type="ECO:0000303" key="7">
    <source>
    </source>
</evidence>
<evidence type="ECO:0000305" key="8"/>
<name>TRI39_MOUSE</name>
<accession>Q9ESN2</accession>
<accession>Q8BPR5</accession>
<accession>Q8K0F7</accession>
<reference key="1">
    <citation type="journal article" date="2000" name="Biochem. Biophys. Res. Commun.">
        <title>Molecular cloning of testis-abundant finger protein/ring finger protein 23 (RNF23), a novel RING-B box-coiled coil-B30.2 protein on the class I region of the human MHC.</title>
        <authorList>
            <person name="Orimo A."/>
            <person name="Yamagishi T."/>
            <person name="Tominaga N."/>
            <person name="Yamauchi Y."/>
            <person name="Hishinuma T."/>
            <person name="Okada K."/>
            <person name="Suzuki M."/>
            <person name="Sato M."/>
            <person name="Nogi Y."/>
            <person name="Suzuki H."/>
            <person name="Inoue S."/>
            <person name="Yoshimura K."/>
            <person name="Shimizu Y."/>
            <person name="Muramatsu M."/>
        </authorList>
    </citation>
    <scope>NUCLEOTIDE SEQUENCE [MRNA] (ISOFORM 1)</scope>
    <source>
        <tissue>Testis</tissue>
    </source>
</reference>
<reference key="2">
    <citation type="journal article" date="2005" name="Science">
        <title>The transcriptional landscape of the mammalian genome.</title>
        <authorList>
            <person name="Carninci P."/>
            <person name="Kasukawa T."/>
            <person name="Katayama S."/>
            <person name="Gough J."/>
            <person name="Frith M.C."/>
            <person name="Maeda N."/>
            <person name="Oyama R."/>
            <person name="Ravasi T."/>
            <person name="Lenhard B."/>
            <person name="Wells C."/>
            <person name="Kodzius R."/>
            <person name="Shimokawa K."/>
            <person name="Bajic V.B."/>
            <person name="Brenner S.E."/>
            <person name="Batalov S."/>
            <person name="Forrest A.R."/>
            <person name="Zavolan M."/>
            <person name="Davis M.J."/>
            <person name="Wilming L.G."/>
            <person name="Aidinis V."/>
            <person name="Allen J.E."/>
            <person name="Ambesi-Impiombato A."/>
            <person name="Apweiler R."/>
            <person name="Aturaliya R.N."/>
            <person name="Bailey T.L."/>
            <person name="Bansal M."/>
            <person name="Baxter L."/>
            <person name="Beisel K.W."/>
            <person name="Bersano T."/>
            <person name="Bono H."/>
            <person name="Chalk A.M."/>
            <person name="Chiu K.P."/>
            <person name="Choudhary V."/>
            <person name="Christoffels A."/>
            <person name="Clutterbuck D.R."/>
            <person name="Crowe M.L."/>
            <person name="Dalla E."/>
            <person name="Dalrymple B.P."/>
            <person name="de Bono B."/>
            <person name="Della Gatta G."/>
            <person name="di Bernardo D."/>
            <person name="Down T."/>
            <person name="Engstrom P."/>
            <person name="Fagiolini M."/>
            <person name="Faulkner G."/>
            <person name="Fletcher C.F."/>
            <person name="Fukushima T."/>
            <person name="Furuno M."/>
            <person name="Futaki S."/>
            <person name="Gariboldi M."/>
            <person name="Georgii-Hemming P."/>
            <person name="Gingeras T.R."/>
            <person name="Gojobori T."/>
            <person name="Green R.E."/>
            <person name="Gustincich S."/>
            <person name="Harbers M."/>
            <person name="Hayashi Y."/>
            <person name="Hensch T.K."/>
            <person name="Hirokawa N."/>
            <person name="Hill D."/>
            <person name="Huminiecki L."/>
            <person name="Iacono M."/>
            <person name="Ikeo K."/>
            <person name="Iwama A."/>
            <person name="Ishikawa T."/>
            <person name="Jakt M."/>
            <person name="Kanapin A."/>
            <person name="Katoh M."/>
            <person name="Kawasawa Y."/>
            <person name="Kelso J."/>
            <person name="Kitamura H."/>
            <person name="Kitano H."/>
            <person name="Kollias G."/>
            <person name="Krishnan S.P."/>
            <person name="Kruger A."/>
            <person name="Kummerfeld S.K."/>
            <person name="Kurochkin I.V."/>
            <person name="Lareau L.F."/>
            <person name="Lazarevic D."/>
            <person name="Lipovich L."/>
            <person name="Liu J."/>
            <person name="Liuni S."/>
            <person name="McWilliam S."/>
            <person name="Madan Babu M."/>
            <person name="Madera M."/>
            <person name="Marchionni L."/>
            <person name="Matsuda H."/>
            <person name="Matsuzawa S."/>
            <person name="Miki H."/>
            <person name="Mignone F."/>
            <person name="Miyake S."/>
            <person name="Morris K."/>
            <person name="Mottagui-Tabar S."/>
            <person name="Mulder N."/>
            <person name="Nakano N."/>
            <person name="Nakauchi H."/>
            <person name="Ng P."/>
            <person name="Nilsson R."/>
            <person name="Nishiguchi S."/>
            <person name="Nishikawa S."/>
            <person name="Nori F."/>
            <person name="Ohara O."/>
            <person name="Okazaki Y."/>
            <person name="Orlando V."/>
            <person name="Pang K.C."/>
            <person name="Pavan W.J."/>
            <person name="Pavesi G."/>
            <person name="Pesole G."/>
            <person name="Petrovsky N."/>
            <person name="Piazza S."/>
            <person name="Reed J."/>
            <person name="Reid J.F."/>
            <person name="Ring B.Z."/>
            <person name="Ringwald M."/>
            <person name="Rost B."/>
            <person name="Ruan Y."/>
            <person name="Salzberg S.L."/>
            <person name="Sandelin A."/>
            <person name="Schneider C."/>
            <person name="Schoenbach C."/>
            <person name="Sekiguchi K."/>
            <person name="Semple C.A."/>
            <person name="Seno S."/>
            <person name="Sessa L."/>
            <person name="Sheng Y."/>
            <person name="Shibata Y."/>
            <person name="Shimada H."/>
            <person name="Shimada K."/>
            <person name="Silva D."/>
            <person name="Sinclair B."/>
            <person name="Sperling S."/>
            <person name="Stupka E."/>
            <person name="Sugiura K."/>
            <person name="Sultana R."/>
            <person name="Takenaka Y."/>
            <person name="Taki K."/>
            <person name="Tammoja K."/>
            <person name="Tan S.L."/>
            <person name="Tang S."/>
            <person name="Taylor M.S."/>
            <person name="Tegner J."/>
            <person name="Teichmann S.A."/>
            <person name="Ueda H.R."/>
            <person name="van Nimwegen E."/>
            <person name="Verardo R."/>
            <person name="Wei C.L."/>
            <person name="Yagi K."/>
            <person name="Yamanishi H."/>
            <person name="Zabarovsky E."/>
            <person name="Zhu S."/>
            <person name="Zimmer A."/>
            <person name="Hide W."/>
            <person name="Bult C."/>
            <person name="Grimmond S.M."/>
            <person name="Teasdale R.D."/>
            <person name="Liu E.T."/>
            <person name="Brusic V."/>
            <person name="Quackenbush J."/>
            <person name="Wahlestedt C."/>
            <person name="Mattick J.S."/>
            <person name="Hume D.A."/>
            <person name="Kai C."/>
            <person name="Sasaki D."/>
            <person name="Tomaru Y."/>
            <person name="Fukuda S."/>
            <person name="Kanamori-Katayama M."/>
            <person name="Suzuki M."/>
            <person name="Aoki J."/>
            <person name="Arakawa T."/>
            <person name="Iida J."/>
            <person name="Imamura K."/>
            <person name="Itoh M."/>
            <person name="Kato T."/>
            <person name="Kawaji H."/>
            <person name="Kawagashira N."/>
            <person name="Kawashima T."/>
            <person name="Kojima M."/>
            <person name="Kondo S."/>
            <person name="Konno H."/>
            <person name="Nakano K."/>
            <person name="Ninomiya N."/>
            <person name="Nishio T."/>
            <person name="Okada M."/>
            <person name="Plessy C."/>
            <person name="Shibata K."/>
            <person name="Shiraki T."/>
            <person name="Suzuki S."/>
            <person name="Tagami M."/>
            <person name="Waki K."/>
            <person name="Watahiki A."/>
            <person name="Okamura-Oho Y."/>
            <person name="Suzuki H."/>
            <person name="Kawai J."/>
            <person name="Hayashizaki Y."/>
        </authorList>
    </citation>
    <scope>NUCLEOTIDE SEQUENCE [LARGE SCALE MRNA] (ISOFORM 3)</scope>
    <source>
        <strain>C57BL/6J</strain>
        <tissue>Eye</tissue>
    </source>
</reference>
<reference key="3">
    <citation type="journal article" date="2004" name="Genome Res.">
        <title>The status, quality, and expansion of the NIH full-length cDNA project: the Mammalian Gene Collection (MGC).</title>
        <authorList>
            <consortium name="The MGC Project Team"/>
        </authorList>
    </citation>
    <scope>NUCLEOTIDE SEQUENCE [LARGE SCALE MRNA] (ISOFORM 2)</scope>
    <source>
        <strain>FVB/N</strain>
        <tissue>Mammary gland</tissue>
    </source>
</reference>
<sequence length="488" mass="56369">MAETSLLEAGASAASTAAALENLQVEASCSVCLEYLKEPVIIECGHNFCKACITRWWEDLERDFPCPVCRKTSRYRSLRPNRQLGSMVEIAKQLQTVKRKIRDESLCSQHHEPLSLFCYEDQEAVCLICAISHTHRPHTVVPMDDATQEYKEKLQKCLEPLEQKLQEITCCKASEEKKPGELKRLVESRRQQILKEFEELHRRLDEEQQTLLSRLEEEEQDILQRLRENAAHLGDRRRDLAHLAAEVEGKCLQSGFEMLKDVKSTLEKCEKVKTMEVTSVSIELEKNFSNFPRQYFALRKILKQLIADVTLDPETAHPNLVLSEDRKSVKFVETRLRDLPDTPQRFTFYPCVLATEGFTSGRHYWEVEVGDKTHWAVGVCRDSVSRKGELTPLPETGYWRVRLWNGDKYAATTTPFTPLHIKVKPKRVGIFLDYEAGTLSFYNVTDRSHIYTFTDTFTEKLWPLFYPGIRAGRKNAAPLTIRPPTDWE</sequence>
<organism>
    <name type="scientific">Mus musculus</name>
    <name type="common">Mouse</name>
    <dbReference type="NCBI Taxonomy" id="10090"/>
    <lineage>
        <taxon>Eukaryota</taxon>
        <taxon>Metazoa</taxon>
        <taxon>Chordata</taxon>
        <taxon>Craniata</taxon>
        <taxon>Vertebrata</taxon>
        <taxon>Euteleostomi</taxon>
        <taxon>Mammalia</taxon>
        <taxon>Eutheria</taxon>
        <taxon>Euarchontoglires</taxon>
        <taxon>Glires</taxon>
        <taxon>Rodentia</taxon>
        <taxon>Myomorpha</taxon>
        <taxon>Muroidea</taxon>
        <taxon>Muridae</taxon>
        <taxon>Murinae</taxon>
        <taxon>Mus</taxon>
        <taxon>Mus</taxon>
    </lineage>
</organism>
<proteinExistence type="evidence at transcript level"/>
<keyword id="KW-0025">Alternative splicing</keyword>
<keyword id="KW-0053">Apoptosis</keyword>
<keyword id="KW-0175">Coiled coil</keyword>
<keyword id="KW-0963">Cytoplasm</keyword>
<keyword id="KW-0479">Metal-binding</keyword>
<keyword id="KW-0496">Mitochondrion</keyword>
<keyword id="KW-0539">Nucleus</keyword>
<keyword id="KW-1185">Reference proteome</keyword>
<keyword id="KW-0808">Transferase</keyword>
<keyword id="KW-0832">Ubl conjugation</keyword>
<keyword id="KW-0833">Ubl conjugation pathway</keyword>
<keyword id="KW-0862">Zinc</keyword>
<keyword id="KW-0863">Zinc-finger</keyword>